<name>RL23_CERS5</name>
<feature type="chain" id="PRO_1000068146" description="Large ribosomal subunit protein uL23">
    <location>
        <begin position="1"/>
        <end position="98"/>
    </location>
</feature>
<keyword id="KW-0687">Ribonucleoprotein</keyword>
<keyword id="KW-0689">Ribosomal protein</keyword>
<keyword id="KW-0694">RNA-binding</keyword>
<keyword id="KW-0699">rRNA-binding</keyword>
<gene>
    <name evidence="1" type="primary">rplW</name>
    <name type="ordered locus">Rsph17025_2532</name>
</gene>
<accession>A4WVK6</accession>
<evidence type="ECO:0000255" key="1">
    <source>
        <dbReference type="HAMAP-Rule" id="MF_01369"/>
    </source>
</evidence>
<evidence type="ECO:0000305" key="2"/>
<dbReference type="EMBL" id="CP000661">
    <property type="protein sequence ID" value="ABP71420.1"/>
    <property type="molecule type" value="Genomic_DNA"/>
</dbReference>
<dbReference type="SMR" id="A4WVK6"/>
<dbReference type="STRING" id="349102.Rsph17025_2532"/>
<dbReference type="KEGG" id="rsq:Rsph17025_2532"/>
<dbReference type="eggNOG" id="COG0089">
    <property type="taxonomic scope" value="Bacteria"/>
</dbReference>
<dbReference type="HOGENOM" id="CLU_037562_3_1_5"/>
<dbReference type="BioCyc" id="RSPH349102:G1G8M-2610-MONOMER"/>
<dbReference type="GO" id="GO:1990904">
    <property type="term" value="C:ribonucleoprotein complex"/>
    <property type="evidence" value="ECO:0007669"/>
    <property type="project" value="UniProtKB-KW"/>
</dbReference>
<dbReference type="GO" id="GO:0005840">
    <property type="term" value="C:ribosome"/>
    <property type="evidence" value="ECO:0007669"/>
    <property type="project" value="UniProtKB-KW"/>
</dbReference>
<dbReference type="GO" id="GO:0019843">
    <property type="term" value="F:rRNA binding"/>
    <property type="evidence" value="ECO:0007669"/>
    <property type="project" value="UniProtKB-UniRule"/>
</dbReference>
<dbReference type="GO" id="GO:0003735">
    <property type="term" value="F:structural constituent of ribosome"/>
    <property type="evidence" value="ECO:0007669"/>
    <property type="project" value="InterPro"/>
</dbReference>
<dbReference type="GO" id="GO:0006412">
    <property type="term" value="P:translation"/>
    <property type="evidence" value="ECO:0007669"/>
    <property type="project" value="UniProtKB-UniRule"/>
</dbReference>
<dbReference type="FunFam" id="3.30.70.330:FF:000001">
    <property type="entry name" value="50S ribosomal protein L23"/>
    <property type="match status" value="1"/>
</dbReference>
<dbReference type="Gene3D" id="3.30.70.330">
    <property type="match status" value="1"/>
</dbReference>
<dbReference type="HAMAP" id="MF_01369_B">
    <property type="entry name" value="Ribosomal_uL23_B"/>
    <property type="match status" value="1"/>
</dbReference>
<dbReference type="InterPro" id="IPR012677">
    <property type="entry name" value="Nucleotide-bd_a/b_plait_sf"/>
</dbReference>
<dbReference type="InterPro" id="IPR013025">
    <property type="entry name" value="Ribosomal_uL23-like"/>
</dbReference>
<dbReference type="InterPro" id="IPR012678">
    <property type="entry name" value="Ribosomal_uL23/eL15/eS24_sf"/>
</dbReference>
<dbReference type="NCBIfam" id="NF004359">
    <property type="entry name" value="PRK05738.1-3"/>
    <property type="match status" value="1"/>
</dbReference>
<dbReference type="NCBIfam" id="NF004360">
    <property type="entry name" value="PRK05738.1-5"/>
    <property type="match status" value="1"/>
</dbReference>
<dbReference type="NCBIfam" id="NF004363">
    <property type="entry name" value="PRK05738.2-4"/>
    <property type="match status" value="1"/>
</dbReference>
<dbReference type="PANTHER" id="PTHR11620">
    <property type="entry name" value="60S RIBOSOMAL PROTEIN L23A"/>
    <property type="match status" value="1"/>
</dbReference>
<dbReference type="Pfam" id="PF00276">
    <property type="entry name" value="Ribosomal_L23"/>
    <property type="match status" value="1"/>
</dbReference>
<dbReference type="SUPFAM" id="SSF54189">
    <property type="entry name" value="Ribosomal proteins S24e, L23 and L15e"/>
    <property type="match status" value="1"/>
</dbReference>
<reference key="1">
    <citation type="submission" date="2007-04" db="EMBL/GenBank/DDBJ databases">
        <title>Complete sequence of chromosome of Rhodobacter sphaeroides ATCC 17025.</title>
        <authorList>
            <consortium name="US DOE Joint Genome Institute"/>
            <person name="Copeland A."/>
            <person name="Lucas S."/>
            <person name="Lapidus A."/>
            <person name="Barry K."/>
            <person name="Detter J.C."/>
            <person name="Glavina del Rio T."/>
            <person name="Hammon N."/>
            <person name="Israni S."/>
            <person name="Dalin E."/>
            <person name="Tice H."/>
            <person name="Pitluck S."/>
            <person name="Chertkov O."/>
            <person name="Brettin T."/>
            <person name="Bruce D."/>
            <person name="Han C."/>
            <person name="Schmutz J."/>
            <person name="Larimer F."/>
            <person name="Land M."/>
            <person name="Hauser L."/>
            <person name="Kyrpides N."/>
            <person name="Kim E."/>
            <person name="Richardson P."/>
            <person name="Mackenzie C."/>
            <person name="Choudhary M."/>
            <person name="Donohue T.J."/>
            <person name="Kaplan S."/>
        </authorList>
    </citation>
    <scope>NUCLEOTIDE SEQUENCE [LARGE SCALE GENOMIC DNA]</scope>
    <source>
        <strain>ATCC 17025 / ATH 2.4.3</strain>
    </source>
</reference>
<comment type="function">
    <text evidence="1">One of the early assembly proteins it binds 23S rRNA. One of the proteins that surrounds the polypeptide exit tunnel on the outside of the ribosome. Forms the main docking site for trigger factor binding to the ribosome.</text>
</comment>
<comment type="subunit">
    <text evidence="1">Part of the 50S ribosomal subunit. Contacts protein L29, and trigger factor when it is bound to the ribosome.</text>
</comment>
<comment type="similarity">
    <text evidence="1">Belongs to the universal ribosomal protein uL23 family.</text>
</comment>
<proteinExistence type="inferred from homology"/>
<protein>
    <recommendedName>
        <fullName evidence="1">Large ribosomal subunit protein uL23</fullName>
    </recommendedName>
    <alternativeName>
        <fullName evidence="2">50S ribosomal protein L23</fullName>
    </alternativeName>
</protein>
<sequence>MTAKPEHYDVIRKPVITEKATMTSEANGVVFAVAMDATKPQIKEAVEAIFNVKVKAVNTTITKGKTKKFKGRPGVRSDRKKAYVTLEEGNTIDVSTGL</sequence>
<organism>
    <name type="scientific">Cereibacter sphaeroides (strain ATCC 17025 / ATH 2.4.3)</name>
    <name type="common">Rhodobacter sphaeroides</name>
    <dbReference type="NCBI Taxonomy" id="349102"/>
    <lineage>
        <taxon>Bacteria</taxon>
        <taxon>Pseudomonadati</taxon>
        <taxon>Pseudomonadota</taxon>
        <taxon>Alphaproteobacteria</taxon>
        <taxon>Rhodobacterales</taxon>
        <taxon>Paracoccaceae</taxon>
        <taxon>Cereibacter</taxon>
    </lineage>
</organism>